<feature type="chain" id="PRO_0000441153" description="Fumonisin cluster-specific transcription factor FUM21">
    <location>
        <begin position="1"/>
        <end position="672"/>
    </location>
</feature>
<feature type="DNA-binding region" description="Zn(2)-C6 fungal-type" evidence="1">
    <location>
        <begin position="30"/>
        <end position="56"/>
    </location>
</feature>
<feature type="region of interest" description="Disordered" evidence="2">
    <location>
        <begin position="65"/>
        <end position="111"/>
    </location>
</feature>
<feature type="region of interest" description="Disordered" evidence="2">
    <location>
        <begin position="190"/>
        <end position="212"/>
    </location>
</feature>
<feature type="compositionally biased region" description="Polar residues" evidence="2">
    <location>
        <begin position="77"/>
        <end position="93"/>
    </location>
</feature>
<protein>
    <recommendedName>
        <fullName evidence="8">Fumonisin cluster-specific transcription factor FUM21</fullName>
    </recommendedName>
</protein>
<gene>
    <name type="primary">FUM21</name>
    <name type="ORF">FVEG_14633</name>
</gene>
<proteinExistence type="evidence at transcript level"/>
<organism>
    <name type="scientific">Gibberella moniliformis (strain M3125 / FGSC 7600)</name>
    <name type="common">Maize ear and stalk rot fungus</name>
    <name type="synonym">Fusarium verticillioides</name>
    <dbReference type="NCBI Taxonomy" id="334819"/>
    <lineage>
        <taxon>Eukaryota</taxon>
        <taxon>Fungi</taxon>
        <taxon>Dikarya</taxon>
        <taxon>Ascomycota</taxon>
        <taxon>Pezizomycotina</taxon>
        <taxon>Sordariomycetes</taxon>
        <taxon>Hypocreomycetidae</taxon>
        <taxon>Hypocreales</taxon>
        <taxon>Nectriaceae</taxon>
        <taxon>Fusarium</taxon>
        <taxon>Fusarium fujikuroi species complex</taxon>
    </lineage>
</organism>
<evidence type="ECO:0000255" key="1">
    <source>
        <dbReference type="PROSITE-ProRule" id="PRU00227"/>
    </source>
</evidence>
<evidence type="ECO:0000256" key="2">
    <source>
        <dbReference type="SAM" id="MobiDB-lite"/>
    </source>
</evidence>
<evidence type="ECO:0000269" key="3">
    <source>
    </source>
</evidence>
<evidence type="ECO:0000269" key="4">
    <source>
    </source>
</evidence>
<evidence type="ECO:0000269" key="5">
    <source>
    </source>
</evidence>
<evidence type="ECO:0000269" key="6">
    <source>
    </source>
</evidence>
<evidence type="ECO:0000269" key="7">
    <source>
    </source>
</evidence>
<evidence type="ECO:0000305" key="8"/>
<comment type="function">
    <text evidence="3 7">Transcription factor that regulates the expression of the gene cluster that mediates the biosynthesis of fumonisins B1 (FB1), B2 (FB2), B3 (FB3), and B4 (FB4), which are carcinogenic mycotoxins.</text>
</comment>
<comment type="subcellular location">
    <subcellularLocation>
        <location evidence="1">Nucleus</location>
    </subcellularLocation>
</comment>
<comment type="induction">
    <text evidence="4 5 6">Expression is controlled by the global regulators for secondary metabolite VE1 and LAE1 (PubMed:19382792, PubMed:22713715). Expression is increased under histone deacetylase (HDAC)-inhibiting conditions (PubMed:22117026).</text>
</comment>
<comment type="disruption phenotype">
    <text evidence="3 7">Impairs the production of fumonisins (PubMed:17483290, PubMed:32546615). Abolishes expression of FUM8 and FUM19 but expression of FUM17 and FUM18 can still be induced (PubMed:32546615).</text>
</comment>
<keyword id="KW-0238">DNA-binding</keyword>
<keyword id="KW-0479">Metal-binding</keyword>
<keyword id="KW-0539">Nucleus</keyword>
<keyword id="KW-1185">Reference proteome</keyword>
<keyword id="KW-0804">Transcription</keyword>
<keyword id="KW-0805">Transcription regulation</keyword>
<accession>W7LKW1</accession>
<accession>A5PEW1</accession>
<name>FUM21_GIBM7</name>
<sequence length="672" mass="74101">MAGSIVFVTDNQISANSRHKPRFRRRRGACESCKRRKVRCNGTNPCNQCQKSSIECLYSSSSWKANDGDTERGPSGSPVQHTRGSLTPPQTSPYGGMACNGSAEESSRFDGSDAHSLLMSLSNTDCTTNTEATEMSQWQNWFVSDLPLGSDVQLTGTSDESLTDWLDPQLVNPADTAAIMQTLSGEDLFKSSGPSYGMSEPPSRDSDPGFNTARNEQIAGFIQKLRSQRPFVLRDENPEAPPGNIRGFYDAKFISQCFDACDADPEGVRVLLERKSMDLIADEITKYALAVDTETSVLFHSLMAIGCHSLNLDQGHRAIGKGKYPASKFFKEALNARQHLRDSPSLGGLQAILTMAYFSARVGDDSTSSFLADAAFCVQTLQLHNAGAIEQKYNSFLEQQVAKRALWFLYSLEKPRCLAQGLLPLIHDDFVDYDPPPSANYSTSEVDWFAINARFARICSSIIKERLGCKLGRTPSRRGKDRASEYSASSVIKRLESLLEEWRDDLPFAGDFDATRSDEFAASTCAERRHRIKCLNKYWSAIIATHSGQARGVAEDGGAGVRLSRARCIDAAQAILQNSHYVTSTDILSDISLYYYITVATRVIMTVVIRDRFASDITGDPVQKNTATRKRETTHGRSIMSYVGIAIGLFSRLSLDIDVPVDEVTELGKLGR</sequence>
<reference key="1">
    <citation type="journal article" date="2003" name="Fungal Genet. Biol.">
        <title>Co-expression of 15 contiguous genes delineates a fumonisin biosynthetic gene cluster in Gibberella moniliformis.</title>
        <authorList>
            <person name="Proctor R.H."/>
            <person name="Brown D.W."/>
            <person name="Plattner R.D."/>
            <person name="Desjardins A.E."/>
        </authorList>
    </citation>
    <scope>NUCLEOTIDE SEQUENCE [GENOMIC DNA]</scope>
    <source>
        <strain>M3125 / FGSC 7600</strain>
    </source>
</reference>
<reference key="2">
    <citation type="journal article" date="2010" name="Nature">
        <title>Comparative genomics reveals mobile pathogenicity chromosomes in Fusarium.</title>
        <authorList>
            <person name="Ma L.-J."/>
            <person name="van der Does H.C."/>
            <person name="Borkovich K.A."/>
            <person name="Coleman J.J."/>
            <person name="Daboussi M.-J."/>
            <person name="Di Pietro A."/>
            <person name="Dufresne M."/>
            <person name="Freitag M."/>
            <person name="Grabherr M."/>
            <person name="Henrissat B."/>
            <person name="Houterman P.M."/>
            <person name="Kang S."/>
            <person name="Shim W.-B."/>
            <person name="Woloshuk C."/>
            <person name="Xie X."/>
            <person name="Xu J.-R."/>
            <person name="Antoniw J."/>
            <person name="Baker S.E."/>
            <person name="Bluhm B.H."/>
            <person name="Breakspear A."/>
            <person name="Brown D.W."/>
            <person name="Butchko R.A.E."/>
            <person name="Chapman S."/>
            <person name="Coulson R."/>
            <person name="Coutinho P.M."/>
            <person name="Danchin E.G.J."/>
            <person name="Diener A."/>
            <person name="Gale L.R."/>
            <person name="Gardiner D.M."/>
            <person name="Goff S."/>
            <person name="Hammond-Kosack K.E."/>
            <person name="Hilburn K."/>
            <person name="Hua-Van A."/>
            <person name="Jonkers W."/>
            <person name="Kazan K."/>
            <person name="Kodira C.D."/>
            <person name="Koehrsen M."/>
            <person name="Kumar L."/>
            <person name="Lee Y.-H."/>
            <person name="Li L."/>
            <person name="Manners J.M."/>
            <person name="Miranda-Saavedra D."/>
            <person name="Mukherjee M."/>
            <person name="Park G."/>
            <person name="Park J."/>
            <person name="Park S.-Y."/>
            <person name="Proctor R.H."/>
            <person name="Regev A."/>
            <person name="Ruiz-Roldan M.C."/>
            <person name="Sain D."/>
            <person name="Sakthikumar S."/>
            <person name="Sykes S."/>
            <person name="Schwartz D.C."/>
            <person name="Turgeon B.G."/>
            <person name="Wapinski I."/>
            <person name="Yoder O."/>
            <person name="Young S."/>
            <person name="Zeng Q."/>
            <person name="Zhou S."/>
            <person name="Galagan J."/>
            <person name="Cuomo C.A."/>
            <person name="Kistler H.C."/>
            <person name="Rep M."/>
        </authorList>
    </citation>
    <scope>NUCLEOTIDE SEQUENCE [LARGE SCALE GENOMIC DNA]</scope>
    <source>
        <strain>M3125 / FGSC 7600</strain>
    </source>
</reference>
<reference key="3">
    <citation type="journal article" date="2007" name="Eukaryot. Cell">
        <title>The Fusarium verticillioides FUM gene cluster encodes a Zn(II)2Cys6 protein that affects FUM gene expression and fumonisin production.</title>
        <authorList>
            <person name="Brown D.W."/>
            <person name="Butchko R.A."/>
            <person name="Busman M."/>
            <person name="Proctor R.H."/>
        </authorList>
    </citation>
    <scope>FUNCTION</scope>
    <scope>DISRUPTION PHENOTYPE</scope>
    <source>
        <strain>M3125 / FGSC 7600</strain>
    </source>
</reference>
<reference key="4">
    <citation type="journal article" date="2009" name="J. Agric. Food Chem.">
        <title>FvVE1 regulates biosynthesis of the mycotoxins fumonisins and fusarins in Fusarium verticillioides.</title>
        <authorList>
            <person name="Myung K."/>
            <person name="Li S."/>
            <person name="Butchko R.A."/>
            <person name="Busman M."/>
            <person name="Proctor R.H."/>
            <person name="Abbas H.K."/>
            <person name="Calvo A.M."/>
        </authorList>
    </citation>
    <scope>INDUCTION</scope>
</reference>
<reference key="5">
    <citation type="journal article" date="2012" name="Eukaryot. Cell">
        <title>Transcription of genes in the biosynthetic pathway for fumonisin mycotoxins is epigenetically and differentially regulated in the fungal maize pathogen Fusarium verticillioides.</title>
        <authorList>
            <person name="Visentin I."/>
            <person name="Montis V."/>
            <person name="Doell K."/>
            <person name="Alabouvette C."/>
            <person name="Tamietti G."/>
            <person name="Karlovsky P."/>
            <person name="Cardinale F."/>
        </authorList>
    </citation>
    <scope>INDUCTION</scope>
</reference>
<reference key="6">
    <citation type="journal article" date="2012" name="Fungal Genet. Biol.">
        <title>Lae1 regulates expression of multiple secondary metabolite gene clusters in Fusarium verticillioides.</title>
        <authorList>
            <person name="Butchko R.A."/>
            <person name="Brown D.W."/>
            <person name="Busman M."/>
            <person name="Tudzynski B."/>
            <person name="Wiemann P."/>
        </authorList>
    </citation>
    <scope>INDUCTION</scope>
</reference>
<reference evidence="8" key="7">
    <citation type="journal article" date="2020" name="MBio">
        <title>Self-Protection against the Sphingolipid Biosynthesis Inhibitor Fumonisin B1 Is Conferred by a FUM Cluster-Encoded Ceramide Synthase.</title>
        <authorList>
            <person name="Janevska S."/>
            <person name="Ferling I."/>
            <person name="Jojic K."/>
            <person name="Rautschek J."/>
            <person name="Hoefgen S."/>
            <person name="Proctor R.H."/>
            <person name="Hillmann F."/>
            <person name="Valiante V."/>
        </authorList>
    </citation>
    <scope>FUNCTION</scope>
    <scope>DISRUPTION PHENOTYPE</scope>
</reference>
<dbReference type="EMBL" id="AF155773">
    <property type="protein sequence ID" value="ABQ95367.1"/>
    <property type="molecule type" value="Genomic_DNA"/>
</dbReference>
<dbReference type="EMBL" id="CM000578">
    <property type="protein sequence ID" value="EWG36180.1"/>
    <property type="molecule type" value="Genomic_DNA"/>
</dbReference>
<dbReference type="RefSeq" id="XP_018742371.1">
    <property type="nucleotide sequence ID" value="XM_018903566.1"/>
</dbReference>
<dbReference type="SMR" id="W7LKW1"/>
<dbReference type="STRING" id="334819.W7LKW1"/>
<dbReference type="GeneID" id="30071509"/>
<dbReference type="VEuPathDB" id="FungiDB:FVEG_14633"/>
<dbReference type="Proteomes" id="UP000009096">
    <property type="component" value="Chromosome 1"/>
</dbReference>
<dbReference type="GO" id="GO:0005634">
    <property type="term" value="C:nucleus"/>
    <property type="evidence" value="ECO:0007669"/>
    <property type="project" value="UniProtKB-SubCell"/>
</dbReference>
<dbReference type="GO" id="GO:0003677">
    <property type="term" value="F:DNA binding"/>
    <property type="evidence" value="ECO:0007669"/>
    <property type="project" value="UniProtKB-KW"/>
</dbReference>
<dbReference type="GO" id="GO:0000981">
    <property type="term" value="F:DNA-binding transcription factor activity, RNA polymerase II-specific"/>
    <property type="evidence" value="ECO:0007669"/>
    <property type="project" value="InterPro"/>
</dbReference>
<dbReference type="GO" id="GO:0008270">
    <property type="term" value="F:zinc ion binding"/>
    <property type="evidence" value="ECO:0007669"/>
    <property type="project" value="InterPro"/>
</dbReference>
<dbReference type="GO" id="GO:1900685">
    <property type="term" value="P:positive regulation of fumonisin biosynthetic process"/>
    <property type="evidence" value="ECO:0000314"/>
    <property type="project" value="GO_Central"/>
</dbReference>
<dbReference type="CDD" id="cd12148">
    <property type="entry name" value="fungal_TF_MHR"/>
    <property type="match status" value="1"/>
</dbReference>
<dbReference type="CDD" id="cd00067">
    <property type="entry name" value="GAL4"/>
    <property type="match status" value="1"/>
</dbReference>
<dbReference type="Gene3D" id="4.10.240.10">
    <property type="entry name" value="Zn(2)-C6 fungal-type DNA-binding domain"/>
    <property type="match status" value="1"/>
</dbReference>
<dbReference type="InterPro" id="IPR050987">
    <property type="entry name" value="AtrR-like"/>
</dbReference>
<dbReference type="InterPro" id="IPR036864">
    <property type="entry name" value="Zn2-C6_fun-type_DNA-bd_sf"/>
</dbReference>
<dbReference type="InterPro" id="IPR001138">
    <property type="entry name" value="Zn2Cys6_DnaBD"/>
</dbReference>
<dbReference type="PANTHER" id="PTHR46910:SF3">
    <property type="entry name" value="HALOTOLERANCE PROTEIN 9-RELATED"/>
    <property type="match status" value="1"/>
</dbReference>
<dbReference type="PANTHER" id="PTHR46910">
    <property type="entry name" value="TRANSCRIPTION FACTOR PDR1"/>
    <property type="match status" value="1"/>
</dbReference>
<dbReference type="Pfam" id="PF00172">
    <property type="entry name" value="Zn_clus"/>
    <property type="match status" value="1"/>
</dbReference>
<dbReference type="SMART" id="SM00066">
    <property type="entry name" value="GAL4"/>
    <property type="match status" value="1"/>
</dbReference>
<dbReference type="SUPFAM" id="SSF57701">
    <property type="entry name" value="Zn2/Cys6 DNA-binding domain"/>
    <property type="match status" value="1"/>
</dbReference>
<dbReference type="PROSITE" id="PS00463">
    <property type="entry name" value="ZN2_CY6_FUNGAL_1"/>
    <property type="match status" value="1"/>
</dbReference>
<dbReference type="PROSITE" id="PS50048">
    <property type="entry name" value="ZN2_CY6_FUNGAL_2"/>
    <property type="match status" value="1"/>
</dbReference>